<organism>
    <name type="scientific">Staphylococcus aureus (strain USA300)</name>
    <dbReference type="NCBI Taxonomy" id="367830"/>
    <lineage>
        <taxon>Bacteria</taxon>
        <taxon>Bacillati</taxon>
        <taxon>Bacillota</taxon>
        <taxon>Bacilli</taxon>
        <taxon>Bacillales</taxon>
        <taxon>Staphylococcaceae</taxon>
        <taxon>Staphylococcus</taxon>
    </lineage>
</organism>
<feature type="chain" id="PRO_0000337944" description="Cell cycle protein GpsB">
    <location>
        <begin position="1"/>
        <end position="114"/>
    </location>
</feature>
<feature type="region of interest" description="Disordered" evidence="2">
    <location>
        <begin position="74"/>
        <end position="99"/>
    </location>
</feature>
<feature type="coiled-coil region" evidence="1">
    <location>
        <begin position="42"/>
        <end position="77"/>
    </location>
</feature>
<feature type="compositionally biased region" description="Low complexity" evidence="2">
    <location>
        <begin position="85"/>
        <end position="97"/>
    </location>
</feature>
<comment type="function">
    <text evidence="1">Divisome component that associates with the complex late in its assembly, after the Z-ring is formed, and is dependent on DivIC and PBP2B for its recruitment to the divisome. Together with EzrA, is a key component of the system that regulates PBP1 localization during cell cycle progression. Its main role could be the removal of PBP1 from the cell pole after pole maturation is completed. Also contributes to the recruitment of PBP1 to the division complex. Not essential for septum formation.</text>
</comment>
<comment type="subunit">
    <text evidence="1">Forms polymers through the coiled coil domains. Interacts with PBP1, MreC and EzrA.</text>
</comment>
<comment type="subcellular location">
    <subcellularLocation>
        <location evidence="1">Cytoplasm</location>
    </subcellularLocation>
    <text evidence="1">Shuttles between the lateral wall and the division site in a cell cycle-dependent manner.</text>
</comment>
<comment type="similarity">
    <text evidence="1">Belongs to the GpsB family.</text>
</comment>
<proteinExistence type="inferred from homology"/>
<evidence type="ECO:0000255" key="1">
    <source>
        <dbReference type="HAMAP-Rule" id="MF_02011"/>
    </source>
</evidence>
<evidence type="ECO:0000256" key="2">
    <source>
        <dbReference type="SAM" id="MobiDB-lite"/>
    </source>
</evidence>
<gene>
    <name evidence="1" type="primary">gpsB</name>
    <name type="ordered locus">SAUSA300_1337</name>
</gene>
<reference key="1">
    <citation type="journal article" date="2006" name="Lancet">
        <title>Complete genome sequence of USA300, an epidemic clone of community-acquired meticillin-resistant Staphylococcus aureus.</title>
        <authorList>
            <person name="Diep B.A."/>
            <person name="Gill S.R."/>
            <person name="Chang R.F."/>
            <person name="Phan T.H."/>
            <person name="Chen J.H."/>
            <person name="Davidson M.G."/>
            <person name="Lin F."/>
            <person name="Lin J."/>
            <person name="Carleton H.A."/>
            <person name="Mongodin E.F."/>
            <person name="Sensabaugh G.F."/>
            <person name="Perdreau-Remington F."/>
        </authorList>
    </citation>
    <scope>NUCLEOTIDE SEQUENCE [LARGE SCALE GENOMIC DNA]</scope>
    <source>
        <strain>USA300</strain>
    </source>
</reference>
<name>GPSB_STAA3</name>
<keyword id="KW-0131">Cell cycle</keyword>
<keyword id="KW-0132">Cell division</keyword>
<keyword id="KW-0133">Cell shape</keyword>
<keyword id="KW-0175">Coiled coil</keyword>
<keyword id="KW-0963">Cytoplasm</keyword>
<accession>Q2FGZ4</accession>
<sequence length="114" mass="13151">MSDVSLKLSAKDIYEKDFEKTMARGYRREEVDAFLDDIIADYQKMADMNNEVVKLSEENHKLKKELEELRLRVATSRPQDNKSFSSNNTTTNTSSNNVDILKRISNLEKAVFGK</sequence>
<protein>
    <recommendedName>
        <fullName evidence="1">Cell cycle protein GpsB</fullName>
    </recommendedName>
    <alternativeName>
        <fullName evidence="1">Guiding PBP1-shuttling protein</fullName>
    </alternativeName>
</protein>
<dbReference type="EMBL" id="CP000255">
    <property type="protein sequence ID" value="ABD22605.1"/>
    <property type="molecule type" value="Genomic_DNA"/>
</dbReference>
<dbReference type="RefSeq" id="WP_001286320.1">
    <property type="nucleotide sequence ID" value="NZ_CP027476.1"/>
</dbReference>
<dbReference type="SMR" id="Q2FGZ4"/>
<dbReference type="GeneID" id="98345812"/>
<dbReference type="KEGG" id="saa:SAUSA300_1337"/>
<dbReference type="HOGENOM" id="CLU_140309_1_0_9"/>
<dbReference type="OMA" id="MEQVKYT"/>
<dbReference type="Proteomes" id="UP000001939">
    <property type="component" value="Chromosome"/>
</dbReference>
<dbReference type="GO" id="GO:0005737">
    <property type="term" value="C:cytoplasm"/>
    <property type="evidence" value="ECO:0007669"/>
    <property type="project" value="UniProtKB-SubCell"/>
</dbReference>
<dbReference type="GO" id="GO:0051301">
    <property type="term" value="P:cell division"/>
    <property type="evidence" value="ECO:0007669"/>
    <property type="project" value="UniProtKB-UniRule"/>
</dbReference>
<dbReference type="GO" id="GO:0008360">
    <property type="term" value="P:regulation of cell shape"/>
    <property type="evidence" value="ECO:0007669"/>
    <property type="project" value="UniProtKB-UniRule"/>
</dbReference>
<dbReference type="Gene3D" id="6.10.250.660">
    <property type="match status" value="1"/>
</dbReference>
<dbReference type="HAMAP" id="MF_02011">
    <property type="entry name" value="GpsB"/>
    <property type="match status" value="1"/>
</dbReference>
<dbReference type="InterPro" id="IPR011229">
    <property type="entry name" value="Cell_cycle_GpsB"/>
</dbReference>
<dbReference type="InterPro" id="IPR019933">
    <property type="entry name" value="DivIVA_domain"/>
</dbReference>
<dbReference type="InterPro" id="IPR007793">
    <property type="entry name" value="DivIVA_fam"/>
</dbReference>
<dbReference type="NCBIfam" id="TIGR03544">
    <property type="entry name" value="DivI1A_domain"/>
    <property type="match status" value="1"/>
</dbReference>
<dbReference type="NCBIfam" id="NF010725">
    <property type="entry name" value="PRK14127.1"/>
    <property type="match status" value="1"/>
</dbReference>
<dbReference type="PANTHER" id="PTHR35794:SF1">
    <property type="entry name" value="CELL CYCLE PROTEIN GPSB"/>
    <property type="match status" value="1"/>
</dbReference>
<dbReference type="PANTHER" id="PTHR35794">
    <property type="entry name" value="CELL DIVISION PROTEIN DIVIVA"/>
    <property type="match status" value="1"/>
</dbReference>
<dbReference type="Pfam" id="PF05103">
    <property type="entry name" value="DivIVA"/>
    <property type="match status" value="1"/>
</dbReference>
<dbReference type="PIRSF" id="PIRSF029938">
    <property type="entry name" value="UCP029938"/>
    <property type="match status" value="1"/>
</dbReference>